<accession>Q8G510</accession>
<sequence length="454" mass="47606">MLNIMEVHETNQMIEQEKLDVRTITMGISLLDCASDDVDKTCDNIYRKITTYAKDLVSTGKAIERDYGIPIVNKRITVTPISLVGASSCKTSEDFVKIAHALDKAAKEVGVDLIGGYSALVSKSMTPAEELLIRSLPQALSETDIVCSSVNVGSTKTGIDMNAVELLGHIIKDVAERTADNDSYGCVKFVAFCNVPDDNPFMAGGFHGVTEGDAVINVGVSGPGVVSRALDAAKGKDFEFLCETIKRTAFKITRVGQLVAQEASRRLGIPFGIIDLSLAPTPAVGDSVGEVLEKIGLEQVGAPGTTAALAMLNDQVKKGGIMASSYVGGLSGAFIPVSEDKNMIDAASSDCLTIEKLEAMTCVCSVGLDMIAIPGDTSASTISGLIADEAAIGMVNQKTTAVRVIPVAGKGVGEMANFGGLMGYAPIMPVNQTSCEAFVTRGGRIPAPIHSFKN</sequence>
<evidence type="ECO:0000255" key="1">
    <source>
        <dbReference type="HAMAP-Rule" id="MF_01221"/>
    </source>
</evidence>
<dbReference type="EMBL" id="AE014295">
    <property type="protein sequence ID" value="AAN25015.1"/>
    <property type="molecule type" value="Genomic_DNA"/>
</dbReference>
<dbReference type="RefSeq" id="NP_696379.1">
    <property type="nucleotide sequence ID" value="NC_004307.2"/>
</dbReference>
<dbReference type="RefSeq" id="WP_007053739.1">
    <property type="nucleotide sequence ID" value="NC_004307.2"/>
</dbReference>
<dbReference type="SMR" id="Q8G510"/>
<dbReference type="STRING" id="206672.BL1209"/>
<dbReference type="EnsemblBacteria" id="AAN25015">
    <property type="protein sequence ID" value="AAN25015"/>
    <property type="gene ID" value="BL1209"/>
</dbReference>
<dbReference type="KEGG" id="blo:BL1209"/>
<dbReference type="PATRIC" id="fig|206672.9.peg.924"/>
<dbReference type="HOGENOM" id="CLU_048704_0_0_11"/>
<dbReference type="OrthoDB" id="9763001at2"/>
<dbReference type="PhylomeDB" id="Q8G510"/>
<dbReference type="Proteomes" id="UP000000439">
    <property type="component" value="Chromosome"/>
</dbReference>
<dbReference type="CDD" id="cd08025">
    <property type="entry name" value="RNR_PFL_like_DUF711"/>
    <property type="match status" value="1"/>
</dbReference>
<dbReference type="Gene3D" id="3.20.70.20">
    <property type="match status" value="1"/>
</dbReference>
<dbReference type="HAMAP" id="MF_01221">
    <property type="entry name" value="UPF0210"/>
    <property type="match status" value="1"/>
</dbReference>
<dbReference type="InterPro" id="IPR007841">
    <property type="entry name" value="UPF0210"/>
</dbReference>
<dbReference type="NCBIfam" id="NF003700">
    <property type="entry name" value="PRK05313.1"/>
    <property type="match status" value="1"/>
</dbReference>
<dbReference type="PANTHER" id="PTHR37560:SF1">
    <property type="entry name" value="UPF0210 PROTEIN MJ1665"/>
    <property type="match status" value="1"/>
</dbReference>
<dbReference type="PANTHER" id="PTHR37560">
    <property type="entry name" value="UPF0210 PROTEIN SPR0218"/>
    <property type="match status" value="1"/>
</dbReference>
<dbReference type="Pfam" id="PF05167">
    <property type="entry name" value="DUF711"/>
    <property type="match status" value="1"/>
</dbReference>
<dbReference type="SUPFAM" id="SSF51998">
    <property type="entry name" value="PFL-like glycyl radical enzymes"/>
    <property type="match status" value="1"/>
</dbReference>
<reference key="1">
    <citation type="journal article" date="2002" name="Proc. Natl. Acad. Sci. U.S.A.">
        <title>The genome sequence of Bifidobacterium longum reflects its adaptation to the human gastrointestinal tract.</title>
        <authorList>
            <person name="Schell M.A."/>
            <person name="Karmirantzou M."/>
            <person name="Snel B."/>
            <person name="Vilanova D."/>
            <person name="Berger B."/>
            <person name="Pessi G."/>
            <person name="Zwahlen M.-C."/>
            <person name="Desiere F."/>
            <person name="Bork P."/>
            <person name="Delley M."/>
            <person name="Pridmore R.D."/>
            <person name="Arigoni F."/>
        </authorList>
    </citation>
    <scope>NUCLEOTIDE SEQUENCE [LARGE SCALE GENOMIC DNA]</scope>
    <source>
        <strain>NCC 2705</strain>
    </source>
</reference>
<comment type="subunit">
    <text evidence="1">Homodimer.</text>
</comment>
<comment type="similarity">
    <text evidence="1">Belongs to the UPF0210 family.</text>
</comment>
<gene>
    <name type="ordered locus">BL1209</name>
</gene>
<keyword id="KW-1185">Reference proteome</keyword>
<name>Y1209_BIFLO</name>
<proteinExistence type="inferred from homology"/>
<organism>
    <name type="scientific">Bifidobacterium longum (strain NCC 2705)</name>
    <dbReference type="NCBI Taxonomy" id="206672"/>
    <lineage>
        <taxon>Bacteria</taxon>
        <taxon>Bacillati</taxon>
        <taxon>Actinomycetota</taxon>
        <taxon>Actinomycetes</taxon>
        <taxon>Bifidobacteriales</taxon>
        <taxon>Bifidobacteriaceae</taxon>
        <taxon>Bifidobacterium</taxon>
    </lineage>
</organism>
<feature type="chain" id="PRO_1000066747" description="UPF0210 protein BL1209">
    <location>
        <begin position="1"/>
        <end position="454"/>
    </location>
</feature>
<protein>
    <recommendedName>
        <fullName evidence="1">UPF0210 protein BL1209</fullName>
    </recommendedName>
</protein>